<proteinExistence type="inferred from homology"/>
<feature type="chain" id="PRO_0000378226" description="Putative cysteine ligase BshC">
    <location>
        <begin position="1"/>
        <end position="565"/>
    </location>
</feature>
<feature type="coiled-coil region" evidence="1">
    <location>
        <begin position="439"/>
        <end position="519"/>
    </location>
</feature>
<evidence type="ECO:0000255" key="1">
    <source>
        <dbReference type="HAMAP-Rule" id="MF_01867"/>
    </source>
</evidence>
<protein>
    <recommendedName>
        <fullName evidence="1">Putative cysteine ligase BshC</fullName>
        <ecNumber evidence="1">6.-.-.-</ecNumber>
    </recommendedName>
</protein>
<organism>
    <name type="scientific">Chlorobium chlorochromatii (strain CaD3)</name>
    <dbReference type="NCBI Taxonomy" id="340177"/>
    <lineage>
        <taxon>Bacteria</taxon>
        <taxon>Pseudomonadati</taxon>
        <taxon>Chlorobiota</taxon>
        <taxon>Chlorobiia</taxon>
        <taxon>Chlorobiales</taxon>
        <taxon>Chlorobiaceae</taxon>
        <taxon>Chlorobium/Pelodictyon group</taxon>
        <taxon>Chlorobium</taxon>
    </lineage>
</organism>
<name>BSHC_CHLCH</name>
<gene>
    <name evidence="1" type="primary">bshC</name>
    <name type="ordered locus">Cag_0292</name>
</gene>
<keyword id="KW-0175">Coiled coil</keyword>
<keyword id="KW-0436">Ligase</keyword>
<comment type="similarity">
    <text evidence="1">Belongs to the BshC family.</text>
</comment>
<accession>Q3ATV7</accession>
<sequence>MNTFQLDYRHIQTPKKGFSALFRDYTADAPERETLIAECFHLDYRKSADYYRQLGLLSARTFQRESLVNMLLRQNSRFGGGERQQQAIEKLRSPRCMAVVTGQQLGLFTGTLYTIYKALTAIIVAEQQKSLFPDYDFVPIFWLEGEDHDYDESASTTIFAENQLKHFTHQPYRRLPDQTVANSSFSDDIRTIIDEMVALLPNTPHRTMVAEMLHECYYPGCTFEISFASTMLRLFRNYPLILLSPQESDFKKLAMPIFFKEIESAPAVSYQVIAQSTRLESLGYSAQTKPRAVNFFYVNQHGQRQKVEQPSSDTFQIVPEKQRLSRHQMLELCQDHPERFSPNVVLRPIVQDYVLPTFATIVGPGEINYMAQYRPIYEHFGITMPFLVPRGSFTLVEPKISRVMDKLIHVTGQPGFSRKNIYNAVFSNLQQVKKNAIGEAEHPQLATMFEQAKDEMRQALERLNHTLSTIDPTLEPLLAASIVQSAKLVETIEQKTWKASRRKHEELLEQIQKAETALFPEGVPQERVVNIFYFIAKYGMGILDDLSNLLKGYASDAHIIAELQG</sequence>
<dbReference type="EC" id="6.-.-.-" evidence="1"/>
<dbReference type="EMBL" id="CP000108">
    <property type="protein sequence ID" value="ABB27568.1"/>
    <property type="molecule type" value="Genomic_DNA"/>
</dbReference>
<dbReference type="SMR" id="Q3ATV7"/>
<dbReference type="STRING" id="340177.Cag_0292"/>
<dbReference type="KEGG" id="cch:Cag_0292"/>
<dbReference type="eggNOG" id="COG4365">
    <property type="taxonomic scope" value="Bacteria"/>
</dbReference>
<dbReference type="HOGENOM" id="CLU_022249_1_0_10"/>
<dbReference type="OrthoDB" id="9765151at2"/>
<dbReference type="GO" id="GO:0016874">
    <property type="term" value="F:ligase activity"/>
    <property type="evidence" value="ECO:0007669"/>
    <property type="project" value="UniProtKB-UniRule"/>
</dbReference>
<dbReference type="HAMAP" id="MF_01867">
    <property type="entry name" value="BshC"/>
    <property type="match status" value="1"/>
</dbReference>
<dbReference type="InterPro" id="IPR011199">
    <property type="entry name" value="Bacillithiol_biosynth_BshC"/>
</dbReference>
<dbReference type="InterPro" id="IPR055399">
    <property type="entry name" value="CC_BshC"/>
</dbReference>
<dbReference type="InterPro" id="IPR055398">
    <property type="entry name" value="Rossmann-like_BshC"/>
</dbReference>
<dbReference type="NCBIfam" id="TIGR03998">
    <property type="entry name" value="thiol_BshC"/>
    <property type="match status" value="1"/>
</dbReference>
<dbReference type="Pfam" id="PF24850">
    <property type="entry name" value="CC_BshC"/>
    <property type="match status" value="1"/>
</dbReference>
<dbReference type="Pfam" id="PF10079">
    <property type="entry name" value="Rossmann-like_BshC"/>
    <property type="match status" value="1"/>
</dbReference>
<dbReference type="PIRSF" id="PIRSF012535">
    <property type="entry name" value="UCP012535"/>
    <property type="match status" value="1"/>
</dbReference>
<reference key="1">
    <citation type="submission" date="2005-08" db="EMBL/GenBank/DDBJ databases">
        <title>Complete sequence of Chlorobium chlorochromatii CaD3.</title>
        <authorList>
            <consortium name="US DOE Joint Genome Institute"/>
            <person name="Copeland A."/>
            <person name="Lucas S."/>
            <person name="Lapidus A."/>
            <person name="Barry K."/>
            <person name="Detter J.C."/>
            <person name="Glavina T."/>
            <person name="Hammon N."/>
            <person name="Israni S."/>
            <person name="Pitluck S."/>
            <person name="Bryant D."/>
            <person name="Schmutz J."/>
            <person name="Larimer F."/>
            <person name="Land M."/>
            <person name="Kyrpides N."/>
            <person name="Ivanova N."/>
            <person name="Richardson P."/>
        </authorList>
    </citation>
    <scope>NUCLEOTIDE SEQUENCE [LARGE SCALE GENOMIC DNA]</scope>
    <source>
        <strain>CaD3</strain>
    </source>
</reference>